<reference key="1">
    <citation type="submission" date="2008-05" db="EMBL/GenBank/DDBJ databases">
        <title>Genome sequence of Helicobacter pylori from the remote Amazon: traces of Asian ancestry of the first Americans.</title>
        <authorList>
            <person name="Kersulyte D."/>
            <person name="Kalia A."/>
            <person name="Gilman R.H."/>
            <person name="Berg D.E."/>
        </authorList>
    </citation>
    <scope>NUCLEOTIDE SEQUENCE [LARGE SCALE GENOMIC DNA]</scope>
    <source>
        <strain>Shi470</strain>
    </source>
</reference>
<gene>
    <name evidence="1" type="primary">htpX</name>
    <name type="ordered locus">HPSH_04885</name>
</gene>
<proteinExistence type="inferred from homology"/>
<organism>
    <name type="scientific">Helicobacter pylori (strain Shi470)</name>
    <dbReference type="NCBI Taxonomy" id="512562"/>
    <lineage>
        <taxon>Bacteria</taxon>
        <taxon>Pseudomonadati</taxon>
        <taxon>Campylobacterota</taxon>
        <taxon>Epsilonproteobacteria</taxon>
        <taxon>Campylobacterales</taxon>
        <taxon>Helicobacteraceae</taxon>
        <taxon>Helicobacter</taxon>
    </lineage>
</organism>
<evidence type="ECO:0000255" key="1">
    <source>
        <dbReference type="HAMAP-Rule" id="MF_00188"/>
    </source>
</evidence>
<sequence length="310" mass="35258">MTNFEKIIAQNKLKTNAVLATYCVIFAFIGLLVDVIRINANDLGTALFKLMTFQIFPTITIIMFLVAFVIIVVCIQNFSSIMLSGDEYKLIDKSKVLSSKENQIHRLLLELLEEAKLHFEPKLYIIKAPYMNAFASGWNESNSLIALTSALIERLDRDELKAVIAHELSHIRHNDIRLTMCVGILSNIMLLVANFSVYFFMGNRKNSGANLARMILLVLQIILPFLTLLLQMYLSRTREYMADSGAAFLMHDNKPMIRALQKISNDYANNDYKGVDQNSTRSAAYLFSAEMFSTHPSIKNRIQSLSRRVI</sequence>
<protein>
    <recommendedName>
        <fullName evidence="1">Protease HtpX homolog</fullName>
        <ecNumber evidence="1">3.4.24.-</ecNumber>
    </recommendedName>
</protein>
<feature type="chain" id="PRO_1000192744" description="Protease HtpX homolog">
    <location>
        <begin position="1"/>
        <end position="310"/>
    </location>
</feature>
<feature type="transmembrane region" description="Helical" evidence="1">
    <location>
        <begin position="16"/>
        <end position="36"/>
    </location>
</feature>
<feature type="transmembrane region" description="Helical" evidence="1">
    <location>
        <begin position="55"/>
        <end position="75"/>
    </location>
</feature>
<feature type="transmembrane region" description="Helical" evidence="1">
    <location>
        <begin position="182"/>
        <end position="202"/>
    </location>
</feature>
<feature type="transmembrane region" description="Helical" evidence="1">
    <location>
        <begin position="214"/>
        <end position="234"/>
    </location>
</feature>
<feature type="active site" evidence="1">
    <location>
        <position position="167"/>
    </location>
</feature>
<feature type="binding site" evidence="1">
    <location>
        <position position="166"/>
    </location>
    <ligand>
        <name>Zn(2+)</name>
        <dbReference type="ChEBI" id="CHEBI:29105"/>
        <note>catalytic</note>
    </ligand>
</feature>
<feature type="binding site" evidence="1">
    <location>
        <position position="170"/>
    </location>
    <ligand>
        <name>Zn(2+)</name>
        <dbReference type="ChEBI" id="CHEBI:29105"/>
        <note>catalytic</note>
    </ligand>
</feature>
<feature type="binding site" evidence="1">
    <location>
        <position position="239"/>
    </location>
    <ligand>
        <name>Zn(2+)</name>
        <dbReference type="ChEBI" id="CHEBI:29105"/>
        <note>catalytic</note>
    </ligand>
</feature>
<name>HTPX_HELPS</name>
<keyword id="KW-0997">Cell inner membrane</keyword>
<keyword id="KW-1003">Cell membrane</keyword>
<keyword id="KW-0378">Hydrolase</keyword>
<keyword id="KW-0472">Membrane</keyword>
<keyword id="KW-0479">Metal-binding</keyword>
<keyword id="KW-0482">Metalloprotease</keyword>
<keyword id="KW-0645">Protease</keyword>
<keyword id="KW-0812">Transmembrane</keyword>
<keyword id="KW-1133">Transmembrane helix</keyword>
<keyword id="KW-0862">Zinc</keyword>
<comment type="cofactor">
    <cofactor evidence="1">
        <name>Zn(2+)</name>
        <dbReference type="ChEBI" id="CHEBI:29105"/>
    </cofactor>
    <text evidence="1">Binds 1 zinc ion per subunit.</text>
</comment>
<comment type="subcellular location">
    <subcellularLocation>
        <location evidence="1">Cell inner membrane</location>
        <topology evidence="1">Multi-pass membrane protein</topology>
    </subcellularLocation>
</comment>
<comment type="similarity">
    <text evidence="1">Belongs to the peptidase M48B family.</text>
</comment>
<accession>B2UU75</accession>
<dbReference type="EC" id="3.4.24.-" evidence="1"/>
<dbReference type="EMBL" id="CP001072">
    <property type="protein sequence ID" value="ACD48407.1"/>
    <property type="molecule type" value="Genomic_DNA"/>
</dbReference>
<dbReference type="KEGG" id="hps:HPSH_04885"/>
<dbReference type="HOGENOM" id="CLU_042266_2_1_7"/>
<dbReference type="GO" id="GO:0005886">
    <property type="term" value="C:plasma membrane"/>
    <property type="evidence" value="ECO:0007669"/>
    <property type="project" value="UniProtKB-SubCell"/>
</dbReference>
<dbReference type="GO" id="GO:0004222">
    <property type="term" value="F:metalloendopeptidase activity"/>
    <property type="evidence" value="ECO:0007669"/>
    <property type="project" value="UniProtKB-UniRule"/>
</dbReference>
<dbReference type="GO" id="GO:0008270">
    <property type="term" value="F:zinc ion binding"/>
    <property type="evidence" value="ECO:0007669"/>
    <property type="project" value="UniProtKB-UniRule"/>
</dbReference>
<dbReference type="GO" id="GO:0006508">
    <property type="term" value="P:proteolysis"/>
    <property type="evidence" value="ECO:0007669"/>
    <property type="project" value="UniProtKB-KW"/>
</dbReference>
<dbReference type="Gene3D" id="3.30.2010.10">
    <property type="entry name" value="Metalloproteases ('zincins'), catalytic domain"/>
    <property type="match status" value="1"/>
</dbReference>
<dbReference type="HAMAP" id="MF_00188">
    <property type="entry name" value="Pept_M48_protease_HtpX"/>
    <property type="match status" value="1"/>
</dbReference>
<dbReference type="InterPro" id="IPR050083">
    <property type="entry name" value="HtpX_protease"/>
</dbReference>
<dbReference type="InterPro" id="IPR022919">
    <property type="entry name" value="Pept_M48_protease_HtpX"/>
</dbReference>
<dbReference type="InterPro" id="IPR001915">
    <property type="entry name" value="Peptidase_M48"/>
</dbReference>
<dbReference type="NCBIfam" id="NF002775">
    <property type="entry name" value="PRK02870.1"/>
    <property type="match status" value="1"/>
</dbReference>
<dbReference type="PANTHER" id="PTHR43221">
    <property type="entry name" value="PROTEASE HTPX"/>
    <property type="match status" value="1"/>
</dbReference>
<dbReference type="PANTHER" id="PTHR43221:SF1">
    <property type="entry name" value="PROTEASE HTPX"/>
    <property type="match status" value="1"/>
</dbReference>
<dbReference type="Pfam" id="PF01435">
    <property type="entry name" value="Peptidase_M48"/>
    <property type="match status" value="1"/>
</dbReference>